<organism>
    <name type="scientific">Encephalitozoon intestinalis</name>
    <name type="common">Microsporidian parasite</name>
    <dbReference type="NCBI Taxonomy" id="58839"/>
    <lineage>
        <taxon>Eukaryota</taxon>
        <taxon>Fungi</taxon>
        <taxon>Fungi incertae sedis</taxon>
        <taxon>Microsporidia</taxon>
        <taxon>Unikaryonidae</taxon>
        <taxon>Encephalitozoon</taxon>
    </lineage>
</organism>
<sequence length="1002" mass="107177">MIKLSLLLSLASFTAVLANQRPRCQRCPVSSSKYFQQNNLLESRFQNEVQRLCARRVREESSSESSSSSSSEDCSRRRRRPHREWEDSCSSSYSSCSSTDSCSSSAPCPPPVAQRCDIELKTPIILMGERIYEFLKNYEDQYKKAVLLFLTNILSQISGFNPVFPGGDYDALIEQLKTLGVTVPANTAAELAAIDAAESSALTRAIQANAQKVISDLLTRVSAMCYLDIMSLVNSGLLASQVSSVFNNIQPIITIAGNDLFAKQMAVFQKLSKTLISTAVTNALQGNRAKFTRFYTTQTSNLQTSVQNSSKTLTSELKKLATDTETAFTAFANAEISTPVRRIFRRSITSSGFEDAEEGEDKDNTGEGEEGEDKDNTGEGEEGEDKDNTGEGEEGEDKDNTGEGEEGEDKDNTGEGEEGEDKDNTGEGEEGEDKDNTGEGEEGEDKDNTGEGEEGEDKDNTGEGEEGEDKDNTGEGEEGEDKDNTGEGEEGEDKDNTGEGEEGEDKDNTGEGEEGEDKDNTGEGEEGEDKDNTGEGEEGEDKDNTGEGEEGEDKDNTGEGEEGEDKDNTGEGEEGEEGEDKDNTGEGEEGEDKDNTGEGEEGEDKDNTGEGEEGEEGEDKDNTGEGEEGEDKDNTGEGEEGEDKDNTGEGEEGEDKDNTGDAEEGEEGEDKDSTGEGEEGEDKDNTGEGEEGEEGEDKDNTGEGEEGEEGEDKDNTGEGEEGEEGEDKDNTGEGEEGEDKDNTGEGEEGEDKDNTGEGDEGEDKDNTGEGEEGEEGEDKDNTGEGEEGEDKDNTGEGEEGEEGEDKDNTGEGEEGEEGEDKDNTGEGEEGEEGEDKDNTGEGEEGEDKDNTGEGEEGEDKDNTGEGEEGEDKDNTGEGEEGEEGEDKDNTGEGEEGEDKDNTGEGEEGEDKDNTGEGEEGEDKDNTGEGEEGEDKDNTGEGEEGEDKDNTGEGEEGEEGEDKDNTGDAEEGEEGEDKDNTGDAEEGEEGEDKDNTEEGEETT</sequence>
<proteinExistence type="evidence at protein level"/>
<comment type="function">
    <text>Spore wall component.</text>
</comment>
<comment type="subunit">
    <text evidence="3">Component of a complex composed of at least SWP1 and SWP2.</text>
</comment>
<comment type="subcellular location">
    <subcellularLocation>
        <location evidence="3">Spore</location>
        <location evidence="3">Perispore</location>
    </subcellularLocation>
</comment>
<comment type="developmental stage">
    <text evidence="3">Synthesized in the fully form of sporont.</text>
</comment>
<comment type="miscellaneous">
    <text>SWP2 is a major antigen recognized during host infection.</text>
</comment>
<reference key="1">
    <citation type="journal article" date="2001" name="Infect. Immun.">
        <title>Developmental expression of two spore wall proteins during maturation of the microsporidian Encephalitozoon intestinalis.</title>
        <authorList>
            <person name="Hayman J.R."/>
            <person name="Hayes S.F."/>
            <person name="Amon J."/>
            <person name="Nash T.E."/>
        </authorList>
    </citation>
    <scope>NUCLEOTIDE SEQUENCE [GENOMIC DNA]</scope>
    <scope>IDENTIFICATION AS AN ANTIGEN</scope>
    <scope>SUBCELLULAR LOCATION</scope>
    <scope>SUBUNIT</scope>
    <scope>DEVELOPMENTAL STAGE</scope>
</reference>
<keyword id="KW-0325">Glycoprotein</keyword>
<keyword id="KW-0677">Repeat</keyword>
<keyword id="KW-0732">Signal</keyword>
<keyword id="KW-0749">Sporulation</keyword>
<accession>Q95WA4</accession>
<protein>
    <recommendedName>
        <fullName>Spore wall protein 2</fullName>
    </recommendedName>
</protein>
<dbReference type="EMBL" id="AF355749">
    <property type="protein sequence ID" value="AAL27282.1"/>
    <property type="molecule type" value="Genomic_DNA"/>
</dbReference>
<dbReference type="GlyCosmos" id="Q95WA4">
    <property type="glycosylation" value="1 site, No reported glycans"/>
</dbReference>
<dbReference type="VEuPathDB" id="MicrosporidiaDB:Eint_101630"/>
<dbReference type="GO" id="GO:0030435">
    <property type="term" value="P:sporulation resulting in formation of a cellular spore"/>
    <property type="evidence" value="ECO:0007669"/>
    <property type="project" value="UniProtKB-KW"/>
</dbReference>
<feature type="signal peptide" evidence="1">
    <location>
        <begin position="1"/>
        <end position="18"/>
    </location>
</feature>
<feature type="chain" id="PRO_5000060239" description="Spore wall protein 2">
    <location>
        <begin position="19"/>
        <end position="1002"/>
    </location>
</feature>
<feature type="repeat" description="1">
    <location>
        <begin position="357"/>
        <end position="368"/>
    </location>
</feature>
<feature type="repeat" description="2">
    <location>
        <begin position="369"/>
        <end position="380"/>
    </location>
</feature>
<feature type="repeat" description="3">
    <location>
        <begin position="381"/>
        <end position="392"/>
    </location>
</feature>
<feature type="repeat" description="4">
    <location>
        <begin position="393"/>
        <end position="404"/>
    </location>
</feature>
<feature type="repeat" description="5">
    <location>
        <begin position="405"/>
        <end position="416"/>
    </location>
</feature>
<feature type="repeat" description="6">
    <location>
        <begin position="417"/>
        <end position="428"/>
    </location>
</feature>
<feature type="repeat" description="7">
    <location>
        <begin position="429"/>
        <end position="440"/>
    </location>
</feature>
<feature type="repeat" description="8">
    <location>
        <begin position="441"/>
        <end position="452"/>
    </location>
</feature>
<feature type="repeat" description="9">
    <location>
        <begin position="453"/>
        <end position="464"/>
    </location>
</feature>
<feature type="repeat" description="10">
    <location>
        <begin position="465"/>
        <end position="476"/>
    </location>
</feature>
<feature type="repeat" description="11">
    <location>
        <begin position="477"/>
        <end position="488"/>
    </location>
</feature>
<feature type="repeat" description="12">
    <location>
        <begin position="489"/>
        <end position="500"/>
    </location>
</feature>
<feature type="repeat" description="13">
    <location>
        <begin position="501"/>
        <end position="512"/>
    </location>
</feature>
<feature type="repeat" description="14">
    <location>
        <begin position="513"/>
        <end position="524"/>
    </location>
</feature>
<feature type="repeat" description="15">
    <location>
        <begin position="525"/>
        <end position="536"/>
    </location>
</feature>
<feature type="repeat" description="16">
    <location>
        <begin position="537"/>
        <end position="548"/>
    </location>
</feature>
<feature type="repeat" description="17">
    <location>
        <begin position="549"/>
        <end position="560"/>
    </location>
</feature>
<feature type="repeat" description="18">
    <location>
        <begin position="561"/>
        <end position="572"/>
    </location>
</feature>
<feature type="repeat" description="19">
    <location>
        <begin position="576"/>
        <end position="587"/>
    </location>
</feature>
<feature type="repeat" description="20">
    <location>
        <begin position="588"/>
        <end position="599"/>
    </location>
</feature>
<feature type="repeat" description="21">
    <location>
        <begin position="600"/>
        <end position="611"/>
    </location>
</feature>
<feature type="repeat" description="22">
    <location>
        <begin position="615"/>
        <end position="626"/>
    </location>
</feature>
<feature type="repeat" description="23">
    <location>
        <begin position="627"/>
        <end position="638"/>
    </location>
</feature>
<feature type="repeat" description="24">
    <location>
        <begin position="639"/>
        <end position="650"/>
    </location>
</feature>
<feature type="repeat" description="25; degenerate">
    <location>
        <begin position="651"/>
        <end position="662"/>
    </location>
</feature>
<feature type="repeat" description="26; degenerate">
    <location>
        <begin position="663"/>
        <end position="674"/>
    </location>
</feature>
<feature type="repeat" description="27">
    <location>
        <begin position="678"/>
        <end position="689"/>
    </location>
</feature>
<feature type="repeat" description="28">
    <location>
        <begin position="693"/>
        <end position="704"/>
    </location>
</feature>
<feature type="repeat" description="29">
    <location>
        <begin position="708"/>
        <end position="719"/>
    </location>
</feature>
<feature type="repeat" description="30">
    <location>
        <begin position="723"/>
        <end position="734"/>
    </location>
</feature>
<feature type="repeat" description="31">
    <location>
        <begin position="735"/>
        <end position="746"/>
    </location>
</feature>
<feature type="repeat" description="32">
    <location>
        <begin position="747"/>
        <end position="758"/>
    </location>
</feature>
<feature type="repeat" description="33">
    <location>
        <begin position="759"/>
        <end position="770"/>
    </location>
</feature>
<feature type="repeat" description="34">
    <location>
        <begin position="774"/>
        <end position="785"/>
    </location>
</feature>
<feature type="repeat" description="35">
    <location>
        <begin position="786"/>
        <end position="797"/>
    </location>
</feature>
<feature type="repeat" description="36">
    <location>
        <begin position="801"/>
        <end position="812"/>
    </location>
</feature>
<feature type="repeat" description="37">
    <location>
        <begin position="816"/>
        <end position="827"/>
    </location>
</feature>
<feature type="repeat" description="38">
    <location>
        <begin position="831"/>
        <end position="842"/>
    </location>
</feature>
<feature type="repeat" description="39">
    <location>
        <begin position="843"/>
        <end position="854"/>
    </location>
</feature>
<feature type="repeat" description="40">
    <location>
        <begin position="855"/>
        <end position="866"/>
    </location>
</feature>
<feature type="repeat" description="41">
    <location>
        <begin position="867"/>
        <end position="878"/>
    </location>
</feature>
<feature type="repeat" description="42">
    <location>
        <begin position="882"/>
        <end position="893"/>
    </location>
</feature>
<feature type="repeat" description="43">
    <location>
        <begin position="894"/>
        <end position="905"/>
    </location>
</feature>
<feature type="repeat" description="44">
    <location>
        <begin position="906"/>
        <end position="915"/>
    </location>
</feature>
<feature type="repeat" description="45">
    <location>
        <begin position="918"/>
        <end position="929"/>
    </location>
</feature>
<feature type="repeat" description="46">
    <location>
        <begin position="930"/>
        <end position="941"/>
    </location>
</feature>
<feature type="repeat" description="47">
    <location>
        <begin position="942"/>
        <end position="953"/>
    </location>
</feature>
<feature type="repeat" description="48">
    <location>
        <begin position="957"/>
        <end position="969"/>
    </location>
</feature>
<feature type="repeat" description="49; degenerate">
    <location>
        <begin position="972"/>
        <end position="983"/>
    </location>
</feature>
<feature type="repeat" description="50; degenerate">
    <location>
        <begin position="987"/>
        <end position="998"/>
    </location>
</feature>
<feature type="region of interest" description="Disordered" evidence="2">
    <location>
        <begin position="349"/>
        <end position="1002"/>
    </location>
</feature>
<feature type="region of interest" description="50 X 12 AA tandem repeats of E-E-G-E-D-K-D-N-T-G-E-G">
    <location>
        <begin position="357"/>
        <end position="998"/>
    </location>
</feature>
<feature type="compositionally biased region" description="Acidic residues" evidence="2">
    <location>
        <begin position="354"/>
        <end position="1002"/>
    </location>
</feature>
<feature type="glycosylation site" description="N-linked (GlcNAc...) asparagine" evidence="1">
    <location>
        <position position="308"/>
    </location>
</feature>
<name>SWP2_ENCIN</name>
<evidence type="ECO:0000255" key="1"/>
<evidence type="ECO:0000256" key="2">
    <source>
        <dbReference type="SAM" id="MobiDB-lite"/>
    </source>
</evidence>
<evidence type="ECO:0000269" key="3">
    <source>
    </source>
</evidence>
<gene>
    <name type="primary">SWP2</name>
</gene>